<gene>
    <name type="ORF">PGTG_19074</name>
</gene>
<feature type="chain" id="PRO_0000416190" description="ATP-dependent (S)-NAD(P)H-hydrate dehydratase 2">
    <location>
        <begin position="1"/>
        <end position="346"/>
    </location>
</feature>
<feature type="domain" description="YjeF C-terminal" evidence="1">
    <location>
        <begin position="28"/>
        <end position="339"/>
    </location>
</feature>
<feature type="region of interest" description="Disordered" evidence="2">
    <location>
        <begin position="1"/>
        <end position="20"/>
    </location>
</feature>
<feature type="binding site" evidence="1">
    <location>
        <position position="135"/>
    </location>
    <ligand>
        <name>(6S)-NADPHX</name>
        <dbReference type="ChEBI" id="CHEBI:64076"/>
    </ligand>
</feature>
<feature type="binding site" evidence="1">
    <location>
        <begin position="188"/>
        <end position="194"/>
    </location>
    <ligand>
        <name>(6S)-NADPHX</name>
        <dbReference type="ChEBI" id="CHEBI:64076"/>
    </ligand>
</feature>
<feature type="binding site" evidence="1">
    <location>
        <begin position="228"/>
        <end position="232"/>
    </location>
    <ligand>
        <name>ATP</name>
        <dbReference type="ChEBI" id="CHEBI:30616"/>
    </ligand>
</feature>
<feature type="binding site" evidence="1">
    <location>
        <begin position="248"/>
        <end position="257"/>
    </location>
    <ligand>
        <name>ATP</name>
        <dbReference type="ChEBI" id="CHEBI:30616"/>
    </ligand>
</feature>
<feature type="binding site" evidence="1">
    <location>
        <position position="258"/>
    </location>
    <ligand>
        <name>(6S)-NADPHX</name>
        <dbReference type="ChEBI" id="CHEBI:64076"/>
    </ligand>
</feature>
<dbReference type="EC" id="4.2.1.93" evidence="1"/>
<dbReference type="EMBL" id="DS178388">
    <property type="protein sequence ID" value="EFP93306.2"/>
    <property type="molecule type" value="Genomic_DNA"/>
</dbReference>
<dbReference type="RefSeq" id="XP_003337725.2">
    <property type="nucleotide sequence ID" value="XM_003337677.2"/>
</dbReference>
<dbReference type="SMR" id="E3L9T1"/>
<dbReference type="FunCoup" id="E3L9T1">
    <property type="interactions" value="19"/>
</dbReference>
<dbReference type="STRING" id="418459.E3L9T1"/>
<dbReference type="EnsemblFungi" id="EFP93306">
    <property type="protein sequence ID" value="EFP93306"/>
    <property type="gene ID" value="PGTG_19074"/>
</dbReference>
<dbReference type="GeneID" id="10543538"/>
<dbReference type="KEGG" id="pgr:PGTG_19074"/>
<dbReference type="VEuPathDB" id="FungiDB:PGTG_19074"/>
<dbReference type="eggNOG" id="KOG3974">
    <property type="taxonomic scope" value="Eukaryota"/>
</dbReference>
<dbReference type="HOGENOM" id="CLU_030651_3_0_1"/>
<dbReference type="InParanoid" id="E3L9T1"/>
<dbReference type="OrthoDB" id="8110916at2759"/>
<dbReference type="Proteomes" id="UP000008783">
    <property type="component" value="Unassembled WGS sequence"/>
</dbReference>
<dbReference type="GO" id="GO:0005737">
    <property type="term" value="C:cytoplasm"/>
    <property type="evidence" value="ECO:0007669"/>
    <property type="project" value="UniProtKB-SubCell"/>
</dbReference>
<dbReference type="GO" id="GO:0005524">
    <property type="term" value="F:ATP binding"/>
    <property type="evidence" value="ECO:0007669"/>
    <property type="project" value="UniProtKB-KW"/>
</dbReference>
<dbReference type="GO" id="GO:0047453">
    <property type="term" value="F:ATP-dependent NAD(P)H-hydrate dehydratase activity"/>
    <property type="evidence" value="ECO:0000318"/>
    <property type="project" value="GO_Central"/>
</dbReference>
<dbReference type="GO" id="GO:0110051">
    <property type="term" value="P:metabolite repair"/>
    <property type="evidence" value="ECO:0000318"/>
    <property type="project" value="GO_Central"/>
</dbReference>
<dbReference type="GO" id="GO:0046496">
    <property type="term" value="P:nicotinamide nucleotide metabolic process"/>
    <property type="evidence" value="ECO:0007669"/>
    <property type="project" value="UniProtKB-UniRule"/>
</dbReference>
<dbReference type="CDD" id="cd01171">
    <property type="entry name" value="YXKO-related"/>
    <property type="match status" value="1"/>
</dbReference>
<dbReference type="FunFam" id="3.40.1190.20:FF:000023">
    <property type="entry name" value="ATP-dependent (S)-NAD(P)H-hydrate dehydratase"/>
    <property type="match status" value="1"/>
</dbReference>
<dbReference type="Gene3D" id="3.40.1190.20">
    <property type="match status" value="1"/>
</dbReference>
<dbReference type="HAMAP" id="MF_01965">
    <property type="entry name" value="NADHX_dehydratase"/>
    <property type="match status" value="1"/>
</dbReference>
<dbReference type="InterPro" id="IPR000631">
    <property type="entry name" value="CARKD"/>
</dbReference>
<dbReference type="InterPro" id="IPR029056">
    <property type="entry name" value="Ribokinase-like"/>
</dbReference>
<dbReference type="NCBIfam" id="TIGR00196">
    <property type="entry name" value="yjeF_cterm"/>
    <property type="match status" value="1"/>
</dbReference>
<dbReference type="PANTHER" id="PTHR12592:SF0">
    <property type="entry name" value="ATP-DEPENDENT (S)-NAD(P)H-HYDRATE DEHYDRATASE"/>
    <property type="match status" value="1"/>
</dbReference>
<dbReference type="PANTHER" id="PTHR12592">
    <property type="entry name" value="ATP-DEPENDENT (S)-NAD(P)H-HYDRATE DEHYDRATASE FAMILY MEMBER"/>
    <property type="match status" value="1"/>
</dbReference>
<dbReference type="Pfam" id="PF01256">
    <property type="entry name" value="Carb_kinase"/>
    <property type="match status" value="1"/>
</dbReference>
<dbReference type="SUPFAM" id="SSF53613">
    <property type="entry name" value="Ribokinase-like"/>
    <property type="match status" value="1"/>
</dbReference>
<dbReference type="PROSITE" id="PS51383">
    <property type="entry name" value="YJEF_C_3"/>
    <property type="match status" value="1"/>
</dbReference>
<reference key="1">
    <citation type="journal article" date="2011" name="Proc. Natl. Acad. Sci. U.S.A.">
        <title>Obligate biotrophy features unraveled by the genomic analysis of rust fungi.</title>
        <authorList>
            <person name="Duplessis S."/>
            <person name="Cuomo C.A."/>
            <person name="Lin Y.-C."/>
            <person name="Aerts A."/>
            <person name="Tisserant E."/>
            <person name="Veneault-Fourrey C."/>
            <person name="Joly D.L."/>
            <person name="Hacquard S."/>
            <person name="Amselem J."/>
            <person name="Cantarel B.L."/>
            <person name="Chiu R."/>
            <person name="Coutinho P.M."/>
            <person name="Feau N."/>
            <person name="Field M."/>
            <person name="Frey P."/>
            <person name="Gelhaye E."/>
            <person name="Goldberg J."/>
            <person name="Grabherr M.G."/>
            <person name="Kodira C.D."/>
            <person name="Kohler A."/>
            <person name="Kuees U."/>
            <person name="Lindquist E.A."/>
            <person name="Lucas S.M."/>
            <person name="Mago R."/>
            <person name="Mauceli E."/>
            <person name="Morin E."/>
            <person name="Murat C."/>
            <person name="Pangilinan J.L."/>
            <person name="Park R."/>
            <person name="Pearson M."/>
            <person name="Quesneville H."/>
            <person name="Rouhier N."/>
            <person name="Sakthikumar S."/>
            <person name="Salamov A.A."/>
            <person name="Schmutz J."/>
            <person name="Selles B."/>
            <person name="Shapiro H."/>
            <person name="Tanguay P."/>
            <person name="Tuskan G.A."/>
            <person name="Henrissat B."/>
            <person name="Van de Peer Y."/>
            <person name="Rouze P."/>
            <person name="Ellis J.G."/>
            <person name="Dodds P.N."/>
            <person name="Schein J.E."/>
            <person name="Zhong S."/>
            <person name="Hamelin R.C."/>
            <person name="Grigoriev I.V."/>
            <person name="Szabo L.J."/>
            <person name="Martin F."/>
        </authorList>
    </citation>
    <scope>NUCLEOTIDE SEQUENCE [LARGE SCALE GENOMIC DNA]</scope>
    <source>
        <strain>CRL 75-36-700-3 / race SCCL</strain>
    </source>
</reference>
<reference key="2">
    <citation type="journal article" date="2017" name="G3 (Bethesda)">
        <title>Comparative analysis highlights variable genome content of wheat rusts and divergence of the mating loci.</title>
        <authorList>
            <person name="Cuomo C.A."/>
            <person name="Bakkeren G."/>
            <person name="Khalil H.B."/>
            <person name="Panwar V."/>
            <person name="Joly D."/>
            <person name="Linning R."/>
            <person name="Sakthikumar S."/>
            <person name="Song X."/>
            <person name="Adiconis X."/>
            <person name="Fan L."/>
            <person name="Goldberg J.M."/>
            <person name="Levin J.Z."/>
            <person name="Young S."/>
            <person name="Zeng Q."/>
            <person name="Anikster Y."/>
            <person name="Bruce M."/>
            <person name="Wang M."/>
            <person name="Yin C."/>
            <person name="McCallum B."/>
            <person name="Szabo L.J."/>
            <person name="Hulbert S."/>
            <person name="Chen X."/>
            <person name="Fellers J.P."/>
        </authorList>
    </citation>
    <scope>GENOME REANNOTATION</scope>
    <source>
        <strain>CRL 75-36-700-3 / race SCCL</strain>
    </source>
</reference>
<evidence type="ECO:0000255" key="1">
    <source>
        <dbReference type="HAMAP-Rule" id="MF_03157"/>
    </source>
</evidence>
<evidence type="ECO:0000256" key="2">
    <source>
        <dbReference type="SAM" id="MobiDB-lite"/>
    </source>
</evidence>
<sequence>MMVHSPLATGPHPTTHLEPTMHQPHRSLLRKAFQMIPPLDGSLHKGQAGRIGIVGGSKDYTGAPFYSGYASLRLGSDLSHVICEPSASTVIKTYSPDLMVHSYLSSPKEPEAYASHQNQFEQLLDRLHVLVVGPGLGRDTEMQDWAEWTLKTAIQKKLHLVLDADALWLLVKKPDLLRGYPNAILTPNHVEFQRLLKACSIEPREHDDDGLLAMELSKALGGCSILQKGSIDLVAREGSEVAKVSCEGSPKRCGGQGDILSGLVGTWCAWTKLYFERQSQDEKPKSHELPISPEEAWIIAAVLGSEITRTCSRLAYHKFGRSMQSSDMLGYIGEAFEQVMHGHTKD</sequence>
<keyword id="KW-0067">ATP-binding</keyword>
<keyword id="KW-0963">Cytoplasm</keyword>
<keyword id="KW-0456">Lyase</keyword>
<keyword id="KW-0520">NAD</keyword>
<keyword id="KW-0521">NADP</keyword>
<keyword id="KW-0547">Nucleotide-binding</keyword>
<keyword id="KW-0597">Phosphoprotein</keyword>
<keyword id="KW-1185">Reference proteome</keyword>
<proteinExistence type="inferred from homology"/>
<comment type="function">
    <text evidence="1">Catalyzes the dehydration of the S-form of NAD(P)HX at the expense of ATP, which is converted to ADP. Together with NAD(P)HX epimerase, which catalyzes the epimerization of the S- and R-forms, the enzyme allows the repair of both epimers of NAD(P)HX, a damaged form of NAD(P)H that is a result of enzymatic or heat-dependent hydration.</text>
</comment>
<comment type="catalytic activity">
    <reaction evidence="1">
        <text>(6S)-NADHX + ATP = ADP + phosphate + NADH + H(+)</text>
        <dbReference type="Rhea" id="RHEA:19017"/>
        <dbReference type="ChEBI" id="CHEBI:15378"/>
        <dbReference type="ChEBI" id="CHEBI:30616"/>
        <dbReference type="ChEBI" id="CHEBI:43474"/>
        <dbReference type="ChEBI" id="CHEBI:57945"/>
        <dbReference type="ChEBI" id="CHEBI:64074"/>
        <dbReference type="ChEBI" id="CHEBI:456216"/>
        <dbReference type="EC" id="4.2.1.93"/>
    </reaction>
</comment>
<comment type="catalytic activity">
    <reaction>
        <text>(6S)-NADPHX + ATP = ADP + phosphate + NADPH + H(+)</text>
        <dbReference type="Rhea" id="RHEA:32231"/>
        <dbReference type="ChEBI" id="CHEBI:15378"/>
        <dbReference type="ChEBI" id="CHEBI:30616"/>
        <dbReference type="ChEBI" id="CHEBI:43474"/>
        <dbReference type="ChEBI" id="CHEBI:57783"/>
        <dbReference type="ChEBI" id="CHEBI:64076"/>
        <dbReference type="ChEBI" id="CHEBI:456216"/>
        <dbReference type="EC" id="4.2.1.93"/>
    </reaction>
</comment>
<comment type="cofactor">
    <cofactor evidence="1">
        <name>Mg(2+)</name>
        <dbReference type="ChEBI" id="CHEBI:18420"/>
    </cofactor>
</comment>
<comment type="subcellular location">
    <subcellularLocation>
        <location evidence="1">Cytoplasm</location>
    </subcellularLocation>
</comment>
<comment type="similarity">
    <text evidence="1">Belongs to the NnrD/CARKD family.</text>
</comment>
<accession>E3L9T1</accession>
<protein>
    <recommendedName>
        <fullName evidence="1">ATP-dependent (S)-NAD(P)H-hydrate dehydratase 2</fullName>
        <ecNumber evidence="1">4.2.1.93</ecNumber>
    </recommendedName>
    <alternativeName>
        <fullName evidence="1">ATP-dependent NAD(P)HX dehydratase 2</fullName>
    </alternativeName>
</protein>
<organism>
    <name type="scientific">Puccinia graminis f. sp. tritici (strain CRL 75-36-700-3 / race SCCL)</name>
    <name type="common">Black stem rust fungus</name>
    <dbReference type="NCBI Taxonomy" id="418459"/>
    <lineage>
        <taxon>Eukaryota</taxon>
        <taxon>Fungi</taxon>
        <taxon>Dikarya</taxon>
        <taxon>Basidiomycota</taxon>
        <taxon>Pucciniomycotina</taxon>
        <taxon>Pucciniomycetes</taxon>
        <taxon>Pucciniales</taxon>
        <taxon>Pucciniaceae</taxon>
        <taxon>Puccinia</taxon>
    </lineage>
</organism>
<name>NNRD2_PUCGT</name>